<proteinExistence type="inferred from homology"/>
<sequence length="489" mass="52303">MTSIGQLRSQVASKERSAVEVARQYLERAERLDTEVHAFLRLTPERALAAAEAVDAKIARGEDPGLLAGVPVAVKDNLCMVGIPTTCASKILENYRPPYESTVTRRLEEQGALIIGKTNLDEFAMGSSTENSAFGPTRNPWDLGRVPGGSSGGSAAAVAACEAVASLGSDTGGSIRQPASFCGVVGLKPTYGLVSRYGLIAFASSLDQIGPFTRTVEDAALVLQAIAGHDPLDSTSLAVNVPDYRQALISDLKGVKVGFVKEFFAEGLDPDVADAVFEAIEVMRDLGAQIQEVSCPRFARGLSTYYIIATSEASANLARYDGVKYGLRDREADALVPMYGRTREEGFGSEVKRRIMLGTYALSAGYYDAYYLKAQKVRTLIKQDYLDAFAKVDVLVGPTAPTTAFAFGDKVSDPLSMYLSDIYTIPLNLAGVAGASIPCGFDAKGLPIGFQIMANALEEGKLLRAAYAYEQATEWHKRTPALAAEALTR</sequence>
<reference key="1">
    <citation type="journal article" date="2003" name="DNA Res.">
        <title>Complete genome structure of Gloeobacter violaceus PCC 7421, a cyanobacterium that lacks thylakoids.</title>
        <authorList>
            <person name="Nakamura Y."/>
            <person name="Kaneko T."/>
            <person name="Sato S."/>
            <person name="Mimuro M."/>
            <person name="Miyashita H."/>
            <person name="Tsuchiya T."/>
            <person name="Sasamoto S."/>
            <person name="Watanabe A."/>
            <person name="Kawashima K."/>
            <person name="Kishida Y."/>
            <person name="Kiyokawa C."/>
            <person name="Kohara M."/>
            <person name="Matsumoto M."/>
            <person name="Matsuno A."/>
            <person name="Nakazaki N."/>
            <person name="Shimpo S."/>
            <person name="Takeuchi C."/>
            <person name="Yamada M."/>
            <person name="Tabata S."/>
        </authorList>
    </citation>
    <scope>NUCLEOTIDE SEQUENCE [LARGE SCALE GENOMIC DNA]</scope>
    <source>
        <strain>ATCC 29082 / PCC 7421</strain>
    </source>
</reference>
<evidence type="ECO:0000255" key="1">
    <source>
        <dbReference type="HAMAP-Rule" id="MF_00120"/>
    </source>
</evidence>
<name>GATA_GLOVI</name>
<organism>
    <name type="scientific">Gloeobacter violaceus (strain ATCC 29082 / PCC 7421)</name>
    <dbReference type="NCBI Taxonomy" id="251221"/>
    <lineage>
        <taxon>Bacteria</taxon>
        <taxon>Bacillati</taxon>
        <taxon>Cyanobacteriota</taxon>
        <taxon>Cyanophyceae</taxon>
        <taxon>Gloeobacterales</taxon>
        <taxon>Gloeobacteraceae</taxon>
        <taxon>Gloeobacter</taxon>
    </lineage>
</organism>
<accession>Q7NKF0</accession>
<dbReference type="EC" id="6.3.5.7" evidence="1"/>
<dbReference type="EMBL" id="BA000045">
    <property type="protein sequence ID" value="BAC89469.1"/>
    <property type="molecule type" value="Genomic_DNA"/>
</dbReference>
<dbReference type="RefSeq" id="NP_924474.1">
    <property type="nucleotide sequence ID" value="NC_005125.1"/>
</dbReference>
<dbReference type="RefSeq" id="WP_011141527.1">
    <property type="nucleotide sequence ID" value="NC_005125.1"/>
</dbReference>
<dbReference type="SMR" id="Q7NKF0"/>
<dbReference type="FunCoup" id="Q7NKF0">
    <property type="interactions" value="294"/>
</dbReference>
<dbReference type="STRING" id="251221.gene:10759017"/>
<dbReference type="EnsemblBacteria" id="BAC89469">
    <property type="protein sequence ID" value="BAC89469"/>
    <property type="gene ID" value="BAC89469"/>
</dbReference>
<dbReference type="KEGG" id="gvi:gll1528"/>
<dbReference type="PATRIC" id="fig|251221.4.peg.1562"/>
<dbReference type="eggNOG" id="COG0154">
    <property type="taxonomic scope" value="Bacteria"/>
</dbReference>
<dbReference type="HOGENOM" id="CLU_009600_0_3_3"/>
<dbReference type="InParanoid" id="Q7NKF0"/>
<dbReference type="OrthoDB" id="9811471at2"/>
<dbReference type="PhylomeDB" id="Q7NKF0"/>
<dbReference type="Proteomes" id="UP000000557">
    <property type="component" value="Chromosome"/>
</dbReference>
<dbReference type="GO" id="GO:0030956">
    <property type="term" value="C:glutamyl-tRNA(Gln) amidotransferase complex"/>
    <property type="evidence" value="ECO:0007669"/>
    <property type="project" value="InterPro"/>
</dbReference>
<dbReference type="GO" id="GO:0005524">
    <property type="term" value="F:ATP binding"/>
    <property type="evidence" value="ECO:0007669"/>
    <property type="project" value="UniProtKB-KW"/>
</dbReference>
<dbReference type="GO" id="GO:0050567">
    <property type="term" value="F:glutaminyl-tRNA synthase (glutamine-hydrolyzing) activity"/>
    <property type="evidence" value="ECO:0007669"/>
    <property type="project" value="UniProtKB-UniRule"/>
</dbReference>
<dbReference type="GO" id="GO:0006412">
    <property type="term" value="P:translation"/>
    <property type="evidence" value="ECO:0007669"/>
    <property type="project" value="UniProtKB-UniRule"/>
</dbReference>
<dbReference type="Gene3D" id="3.90.1300.10">
    <property type="entry name" value="Amidase signature (AS) domain"/>
    <property type="match status" value="1"/>
</dbReference>
<dbReference type="HAMAP" id="MF_00120">
    <property type="entry name" value="GatA"/>
    <property type="match status" value="1"/>
</dbReference>
<dbReference type="InterPro" id="IPR000120">
    <property type="entry name" value="Amidase"/>
</dbReference>
<dbReference type="InterPro" id="IPR020556">
    <property type="entry name" value="Amidase_CS"/>
</dbReference>
<dbReference type="InterPro" id="IPR023631">
    <property type="entry name" value="Amidase_dom"/>
</dbReference>
<dbReference type="InterPro" id="IPR036928">
    <property type="entry name" value="AS_sf"/>
</dbReference>
<dbReference type="InterPro" id="IPR004412">
    <property type="entry name" value="GatA"/>
</dbReference>
<dbReference type="NCBIfam" id="TIGR00132">
    <property type="entry name" value="gatA"/>
    <property type="match status" value="1"/>
</dbReference>
<dbReference type="PANTHER" id="PTHR11895:SF151">
    <property type="entry name" value="GLUTAMYL-TRNA(GLN) AMIDOTRANSFERASE SUBUNIT A"/>
    <property type="match status" value="1"/>
</dbReference>
<dbReference type="PANTHER" id="PTHR11895">
    <property type="entry name" value="TRANSAMIDASE"/>
    <property type="match status" value="1"/>
</dbReference>
<dbReference type="Pfam" id="PF01425">
    <property type="entry name" value="Amidase"/>
    <property type="match status" value="1"/>
</dbReference>
<dbReference type="SUPFAM" id="SSF75304">
    <property type="entry name" value="Amidase signature (AS) enzymes"/>
    <property type="match status" value="1"/>
</dbReference>
<dbReference type="PROSITE" id="PS00571">
    <property type="entry name" value="AMIDASES"/>
    <property type="match status" value="1"/>
</dbReference>
<protein>
    <recommendedName>
        <fullName evidence="1">Glutamyl-tRNA(Gln) amidotransferase subunit A</fullName>
        <shortName evidence="1">Glu-ADT subunit A</shortName>
        <ecNumber evidence="1">6.3.5.7</ecNumber>
    </recommendedName>
</protein>
<keyword id="KW-0067">ATP-binding</keyword>
<keyword id="KW-0436">Ligase</keyword>
<keyword id="KW-0547">Nucleotide-binding</keyword>
<keyword id="KW-0648">Protein biosynthesis</keyword>
<keyword id="KW-1185">Reference proteome</keyword>
<comment type="function">
    <text evidence="1">Allows the formation of correctly charged Gln-tRNA(Gln) through the transamidation of misacylated Glu-tRNA(Gln) in organisms which lack glutaminyl-tRNA synthetase. The reaction takes place in the presence of glutamine and ATP through an activated gamma-phospho-Glu-tRNA(Gln).</text>
</comment>
<comment type="catalytic activity">
    <reaction evidence="1">
        <text>L-glutamyl-tRNA(Gln) + L-glutamine + ATP + H2O = L-glutaminyl-tRNA(Gln) + L-glutamate + ADP + phosphate + H(+)</text>
        <dbReference type="Rhea" id="RHEA:17521"/>
        <dbReference type="Rhea" id="RHEA-COMP:9681"/>
        <dbReference type="Rhea" id="RHEA-COMP:9684"/>
        <dbReference type="ChEBI" id="CHEBI:15377"/>
        <dbReference type="ChEBI" id="CHEBI:15378"/>
        <dbReference type="ChEBI" id="CHEBI:29985"/>
        <dbReference type="ChEBI" id="CHEBI:30616"/>
        <dbReference type="ChEBI" id="CHEBI:43474"/>
        <dbReference type="ChEBI" id="CHEBI:58359"/>
        <dbReference type="ChEBI" id="CHEBI:78520"/>
        <dbReference type="ChEBI" id="CHEBI:78521"/>
        <dbReference type="ChEBI" id="CHEBI:456216"/>
        <dbReference type="EC" id="6.3.5.7"/>
    </reaction>
</comment>
<comment type="subunit">
    <text evidence="1">Heterotrimer of A, B and C subunits.</text>
</comment>
<comment type="similarity">
    <text evidence="1">Belongs to the amidase family. GatA subfamily.</text>
</comment>
<gene>
    <name evidence="1" type="primary">gatA</name>
    <name type="ordered locus">gll1528</name>
</gene>
<feature type="chain" id="PRO_0000105164" description="Glutamyl-tRNA(Gln) amidotransferase subunit A">
    <location>
        <begin position="1"/>
        <end position="489"/>
    </location>
</feature>
<feature type="active site" description="Charge relay system" evidence="1">
    <location>
        <position position="75"/>
    </location>
</feature>
<feature type="active site" description="Charge relay system" evidence="1">
    <location>
        <position position="150"/>
    </location>
</feature>
<feature type="active site" description="Acyl-ester intermediate" evidence="1">
    <location>
        <position position="174"/>
    </location>
</feature>